<protein>
    <recommendedName>
        <fullName>Ornithine aminotransferase, mitochondrial</fullName>
        <ecNumber evidence="2">2.6.1.13</ecNumber>
    </recommendedName>
    <alternativeName>
        <fullName>Ornithine--oxo-acid aminotransferase</fullName>
    </alternativeName>
</protein>
<feature type="transit peptide" description="Mitochondrion" evidence="1">
    <location>
        <begin position="1"/>
        <end position="25"/>
    </location>
</feature>
<feature type="chain" id="PRO_0000283043" description="Ornithine aminotransferase, mitochondrial">
    <location>
        <begin position="26"/>
        <end position="439"/>
    </location>
</feature>
<feature type="modified residue" description="N6-acetyllysine" evidence="3">
    <location>
        <position position="49"/>
    </location>
</feature>
<feature type="modified residue" description="N6-acetyllysine" evidence="3">
    <location>
        <position position="66"/>
    </location>
</feature>
<feature type="modified residue" description="N6-succinyllysine" evidence="3">
    <location>
        <position position="102"/>
    </location>
</feature>
<feature type="modified residue" description="N6-acetyllysine; alternate" evidence="3">
    <location>
        <position position="107"/>
    </location>
</feature>
<feature type="modified residue" description="N6-succinyllysine; alternate" evidence="3">
    <location>
        <position position="107"/>
    </location>
</feature>
<feature type="modified residue" description="N6-(pyridoxal phosphate)lysine" evidence="1">
    <location>
        <position position="292"/>
    </location>
</feature>
<feature type="modified residue" description="N6-acetyllysine; alternate" evidence="3">
    <location>
        <position position="362"/>
    </location>
</feature>
<feature type="modified residue" description="N6-succinyllysine; alternate" evidence="3">
    <location>
        <position position="362"/>
    </location>
</feature>
<feature type="modified residue" description="N6-acetyllysine" evidence="3">
    <location>
        <position position="386"/>
    </location>
</feature>
<feature type="modified residue" description="N6-acetyllysine" evidence="3">
    <location>
        <position position="392"/>
    </location>
</feature>
<feature type="modified residue" description="N6-acetyllysine; alternate" evidence="3">
    <location>
        <position position="405"/>
    </location>
</feature>
<feature type="modified residue" description="N6-succinyllysine; alternate" evidence="3">
    <location>
        <position position="405"/>
    </location>
</feature>
<feature type="modified residue" description="N6-acetyllysine" evidence="3">
    <location>
        <position position="421"/>
    </location>
</feature>
<comment type="function">
    <text evidence="2">Catalyzes the reversible interconversion of L-ornithine and 2-oxoglutarate to L-glutamate semialdehyde and L-glutamate.</text>
</comment>
<comment type="catalytic activity">
    <reaction evidence="2">
        <text>L-ornithine + 2-oxoglutarate = L-glutamate 5-semialdehyde + L-glutamate</text>
        <dbReference type="Rhea" id="RHEA:25160"/>
        <dbReference type="ChEBI" id="CHEBI:16810"/>
        <dbReference type="ChEBI" id="CHEBI:29985"/>
        <dbReference type="ChEBI" id="CHEBI:46911"/>
        <dbReference type="ChEBI" id="CHEBI:58066"/>
        <dbReference type="EC" id="2.6.1.13"/>
    </reaction>
    <physiologicalReaction direction="left-to-right" evidence="2">
        <dbReference type="Rhea" id="RHEA:25161"/>
    </physiologicalReaction>
    <physiologicalReaction direction="right-to-left" evidence="2">
        <dbReference type="Rhea" id="RHEA:25162"/>
    </physiologicalReaction>
</comment>
<comment type="cofactor">
    <cofactor evidence="1">
        <name>pyridoxal 5'-phosphate</name>
        <dbReference type="ChEBI" id="CHEBI:597326"/>
    </cofactor>
</comment>
<comment type="pathway">
    <text evidence="2">Amino-acid biosynthesis; L-proline biosynthesis; L-glutamate 5-semialdehyde from L-ornithine: step 1/1.</text>
</comment>
<comment type="subunit">
    <text evidence="2">Homohexamer.</text>
</comment>
<comment type="subcellular location">
    <subcellularLocation>
        <location evidence="2">Mitochondrion matrix</location>
    </subcellularLocation>
</comment>
<comment type="similarity">
    <text evidence="4">Belongs to the class-III pyridoxal-phosphate-dependent aminotransferase family.</text>
</comment>
<dbReference type="EC" id="2.6.1.13" evidence="2"/>
<dbReference type="EMBL" id="BC102427">
    <property type="protein sequence ID" value="AAI02428.1"/>
    <property type="molecule type" value="mRNA"/>
</dbReference>
<dbReference type="RefSeq" id="NP_001029412.1">
    <property type="nucleotide sequence ID" value="NM_001034240.1"/>
</dbReference>
<dbReference type="SMR" id="Q3ZCF5"/>
<dbReference type="FunCoup" id="Q3ZCF5">
    <property type="interactions" value="1718"/>
</dbReference>
<dbReference type="STRING" id="9913.ENSBTAP00000009097"/>
<dbReference type="SwissPalm" id="Q3ZCF5"/>
<dbReference type="PaxDb" id="9913-ENSBTAP00000009097"/>
<dbReference type="PeptideAtlas" id="Q3ZCF5"/>
<dbReference type="GeneID" id="505323"/>
<dbReference type="KEGG" id="bta:505323"/>
<dbReference type="CTD" id="4942"/>
<dbReference type="eggNOG" id="KOG1402">
    <property type="taxonomic scope" value="Eukaryota"/>
</dbReference>
<dbReference type="InParanoid" id="Q3ZCF5"/>
<dbReference type="OrthoDB" id="425114at2759"/>
<dbReference type="BRENDA" id="2.6.1.13">
    <property type="organism ID" value="908"/>
</dbReference>
<dbReference type="UniPathway" id="UPA00098">
    <property type="reaction ID" value="UER00358"/>
</dbReference>
<dbReference type="Proteomes" id="UP000009136">
    <property type="component" value="Unplaced"/>
</dbReference>
<dbReference type="GO" id="GO:0005737">
    <property type="term" value="C:cytoplasm"/>
    <property type="evidence" value="ECO:0000318"/>
    <property type="project" value="GO_Central"/>
</dbReference>
<dbReference type="GO" id="GO:0005759">
    <property type="term" value="C:mitochondrial matrix"/>
    <property type="evidence" value="ECO:0000250"/>
    <property type="project" value="UniProtKB"/>
</dbReference>
<dbReference type="GO" id="GO:0042802">
    <property type="term" value="F:identical protein binding"/>
    <property type="evidence" value="ECO:0000250"/>
    <property type="project" value="UniProtKB"/>
</dbReference>
<dbReference type="GO" id="GO:0004587">
    <property type="term" value="F:ornithine aminotransferase activity"/>
    <property type="evidence" value="ECO:0000250"/>
    <property type="project" value="UniProtKB"/>
</dbReference>
<dbReference type="GO" id="GO:0030170">
    <property type="term" value="F:pyridoxal phosphate binding"/>
    <property type="evidence" value="ECO:0000318"/>
    <property type="project" value="GO_Central"/>
</dbReference>
<dbReference type="GO" id="GO:0019544">
    <property type="term" value="P:arginine catabolic process to glutamate"/>
    <property type="evidence" value="ECO:0000318"/>
    <property type="project" value="GO_Central"/>
</dbReference>
<dbReference type="GO" id="GO:0010121">
    <property type="term" value="P:arginine catabolic process to proline via ornithine"/>
    <property type="evidence" value="ECO:0000318"/>
    <property type="project" value="GO_Central"/>
</dbReference>
<dbReference type="GO" id="GO:0055129">
    <property type="term" value="P:L-proline biosynthetic process"/>
    <property type="evidence" value="ECO:0007669"/>
    <property type="project" value="UniProtKB-UniPathway"/>
</dbReference>
<dbReference type="CDD" id="cd00610">
    <property type="entry name" value="OAT_like"/>
    <property type="match status" value="1"/>
</dbReference>
<dbReference type="FunFam" id="3.40.640.10:FF:000011">
    <property type="entry name" value="Ornithine aminotransferase"/>
    <property type="match status" value="1"/>
</dbReference>
<dbReference type="FunFam" id="3.90.1150.10:FF:000152">
    <property type="entry name" value="Ornithine aminotransferase"/>
    <property type="match status" value="2"/>
</dbReference>
<dbReference type="Gene3D" id="3.90.1150.10">
    <property type="entry name" value="Aspartate Aminotransferase, domain 1"/>
    <property type="match status" value="1"/>
</dbReference>
<dbReference type="Gene3D" id="3.40.640.10">
    <property type="entry name" value="Type I PLP-dependent aspartate aminotransferase-like (Major domain)"/>
    <property type="match status" value="1"/>
</dbReference>
<dbReference type="InterPro" id="IPR005814">
    <property type="entry name" value="Aminotrans_3"/>
</dbReference>
<dbReference type="InterPro" id="IPR049704">
    <property type="entry name" value="Aminotrans_3_PPA_site"/>
</dbReference>
<dbReference type="InterPro" id="IPR050103">
    <property type="entry name" value="Class-III_PLP-dep_AT"/>
</dbReference>
<dbReference type="InterPro" id="IPR010164">
    <property type="entry name" value="Orn_aminotrans"/>
</dbReference>
<dbReference type="InterPro" id="IPR015424">
    <property type="entry name" value="PyrdxlP-dep_Trfase"/>
</dbReference>
<dbReference type="InterPro" id="IPR015421">
    <property type="entry name" value="PyrdxlP-dep_Trfase_major"/>
</dbReference>
<dbReference type="InterPro" id="IPR015422">
    <property type="entry name" value="PyrdxlP-dep_Trfase_small"/>
</dbReference>
<dbReference type="NCBIfam" id="TIGR01885">
    <property type="entry name" value="Orn_aminotrans"/>
    <property type="match status" value="1"/>
</dbReference>
<dbReference type="PANTHER" id="PTHR11986">
    <property type="entry name" value="AMINOTRANSFERASE CLASS III"/>
    <property type="match status" value="1"/>
</dbReference>
<dbReference type="PANTHER" id="PTHR11986:SF18">
    <property type="entry name" value="ORNITHINE AMINOTRANSFERASE, MITOCHONDRIAL"/>
    <property type="match status" value="1"/>
</dbReference>
<dbReference type="Pfam" id="PF00202">
    <property type="entry name" value="Aminotran_3"/>
    <property type="match status" value="1"/>
</dbReference>
<dbReference type="PIRSF" id="PIRSF000521">
    <property type="entry name" value="Transaminase_4ab_Lys_Orn"/>
    <property type="match status" value="1"/>
</dbReference>
<dbReference type="SUPFAM" id="SSF53383">
    <property type="entry name" value="PLP-dependent transferases"/>
    <property type="match status" value="1"/>
</dbReference>
<dbReference type="PROSITE" id="PS00600">
    <property type="entry name" value="AA_TRANSFER_CLASS_3"/>
    <property type="match status" value="1"/>
</dbReference>
<organism>
    <name type="scientific">Bos taurus</name>
    <name type="common">Bovine</name>
    <dbReference type="NCBI Taxonomy" id="9913"/>
    <lineage>
        <taxon>Eukaryota</taxon>
        <taxon>Metazoa</taxon>
        <taxon>Chordata</taxon>
        <taxon>Craniata</taxon>
        <taxon>Vertebrata</taxon>
        <taxon>Euteleostomi</taxon>
        <taxon>Mammalia</taxon>
        <taxon>Eutheria</taxon>
        <taxon>Laurasiatheria</taxon>
        <taxon>Artiodactyla</taxon>
        <taxon>Ruminantia</taxon>
        <taxon>Pecora</taxon>
        <taxon>Bovidae</taxon>
        <taxon>Bovinae</taxon>
        <taxon>Bos</taxon>
    </lineage>
</organism>
<reference key="1">
    <citation type="submission" date="2005-08" db="EMBL/GenBank/DDBJ databases">
        <authorList>
            <consortium name="NIH - Mammalian Gene Collection (MGC) project"/>
        </authorList>
    </citation>
    <scope>NUCLEOTIDE SEQUENCE [LARGE SCALE MRNA]</scope>
    <source>
        <strain>Crossbred X Angus</strain>
        <tissue>Ileum</tissue>
    </source>
</reference>
<gene>
    <name type="primary">OAT</name>
</gene>
<name>OAT_BOVIN</name>
<proteinExistence type="evidence at transcript level"/>
<evidence type="ECO:0000250" key="1"/>
<evidence type="ECO:0000250" key="2">
    <source>
        <dbReference type="UniProtKB" id="P04181"/>
    </source>
</evidence>
<evidence type="ECO:0000250" key="3">
    <source>
        <dbReference type="UniProtKB" id="P29758"/>
    </source>
</evidence>
<evidence type="ECO:0000305" key="4"/>
<accession>Q3ZCF5</accession>
<sequence length="439" mass="48075">MLSKLARLQTVAGLGLGVHSSVASATSVATKKTVQGPPSSDYIFERESKYGAHNYHPLPVALERGKGIYVWDVEGRKYFDFLSAYSAVNQGHCHPKIVDALKSQVDKLTLTSRAFYNNVLGEYEEYVTKLFNYHKVLPMNTGVEAGETACKLARKWGYTVKGIPKYKAKIVFAAGNFWGRTLSAISSSTDPTSYDGFGPFMPGFEIIPYNDLPALERALQDPNVAAFMVEPIQGEAGVVVPDPGYLVGVRELCTQHQVLFIADEIQTGLARTGRWLAIDHENVRPDIVLLGKALSGGLYPVSAVLCDDEIMLTIKPGEHGSTYGGNPLGCRVAIAALEVLEEENLAENAEKMGIILRNELMKLPSDVVTTVRGKGLLNAIVIRETKDCDAWKVCLRLRDNGLLAKPTHGDIIRFAPPLVIKEDEILEAVEIINKTILSF</sequence>
<keyword id="KW-0007">Acetylation</keyword>
<keyword id="KW-0032">Aminotransferase</keyword>
<keyword id="KW-0496">Mitochondrion</keyword>
<keyword id="KW-0663">Pyridoxal phosphate</keyword>
<keyword id="KW-1185">Reference proteome</keyword>
<keyword id="KW-0808">Transferase</keyword>
<keyword id="KW-0809">Transit peptide</keyword>